<dbReference type="EC" id="2.1.1.183" evidence="2"/>
<dbReference type="EMBL" id="AAFI02000057">
    <property type="protein sequence ID" value="EAL65509.1"/>
    <property type="molecule type" value="Genomic_DNA"/>
</dbReference>
<dbReference type="RefSeq" id="XP_638864.1">
    <property type="nucleotide sequence ID" value="XM_633772.1"/>
</dbReference>
<dbReference type="SMR" id="Q54QK7"/>
<dbReference type="FunCoup" id="Q54QK7">
    <property type="interactions" value="324"/>
</dbReference>
<dbReference type="STRING" id="44689.Q54QK7"/>
<dbReference type="PaxDb" id="44689-DDB0266789"/>
<dbReference type="EnsemblProtists" id="EAL65509">
    <property type="protein sequence ID" value="EAL65509"/>
    <property type="gene ID" value="DDB_G0283789"/>
</dbReference>
<dbReference type="GeneID" id="8624262"/>
<dbReference type="KEGG" id="ddi:DDB_G0283789"/>
<dbReference type="dictyBase" id="DDB_G0283789">
    <property type="gene designation" value="dimt1l"/>
</dbReference>
<dbReference type="VEuPathDB" id="AmoebaDB:DDB_G0283789"/>
<dbReference type="eggNOG" id="KOG0820">
    <property type="taxonomic scope" value="Eukaryota"/>
</dbReference>
<dbReference type="HOGENOM" id="CLU_041220_2_3_1"/>
<dbReference type="InParanoid" id="Q54QK7"/>
<dbReference type="OMA" id="GMFQKEV"/>
<dbReference type="PhylomeDB" id="Q54QK7"/>
<dbReference type="PRO" id="PR:Q54QK7"/>
<dbReference type="Proteomes" id="UP000002195">
    <property type="component" value="Chromosome 4"/>
</dbReference>
<dbReference type="GO" id="GO:0005730">
    <property type="term" value="C:nucleolus"/>
    <property type="evidence" value="ECO:0007669"/>
    <property type="project" value="UniProtKB-SubCell"/>
</dbReference>
<dbReference type="GO" id="GO:0005654">
    <property type="term" value="C:nucleoplasm"/>
    <property type="evidence" value="ECO:0007669"/>
    <property type="project" value="UniProtKB-SubCell"/>
</dbReference>
<dbReference type="GO" id="GO:0032040">
    <property type="term" value="C:small-subunit processome"/>
    <property type="evidence" value="ECO:0000250"/>
    <property type="project" value="UniProtKB"/>
</dbReference>
<dbReference type="GO" id="GO:0052909">
    <property type="term" value="F:18S rRNA (adenine(1779)-N(6)/adenine(1780)-N(6))-dimethyltransferase activity"/>
    <property type="evidence" value="ECO:0007669"/>
    <property type="project" value="UniProtKB-EC"/>
</dbReference>
<dbReference type="GO" id="GO:0003723">
    <property type="term" value="F:RNA binding"/>
    <property type="evidence" value="ECO:0007669"/>
    <property type="project" value="UniProtKB-KW"/>
</dbReference>
<dbReference type="GO" id="GO:0000179">
    <property type="term" value="F:rRNA (adenine-N6,N6-)-dimethyltransferase activity"/>
    <property type="evidence" value="ECO:0000318"/>
    <property type="project" value="GO_Central"/>
</dbReference>
<dbReference type="GO" id="GO:0042274">
    <property type="term" value="P:ribosomal small subunit biogenesis"/>
    <property type="evidence" value="ECO:0000250"/>
    <property type="project" value="UniProtKB"/>
</dbReference>
<dbReference type="GO" id="GO:0031167">
    <property type="term" value="P:rRNA methylation"/>
    <property type="evidence" value="ECO:0000318"/>
    <property type="project" value="GO_Central"/>
</dbReference>
<dbReference type="CDD" id="cd02440">
    <property type="entry name" value="AdoMet_MTases"/>
    <property type="match status" value="1"/>
</dbReference>
<dbReference type="FunFam" id="1.10.8.480:FF:000002">
    <property type="entry name" value="rRNA adenine N(6)-methyltransferase"/>
    <property type="match status" value="1"/>
</dbReference>
<dbReference type="FunFam" id="3.40.50.150:FF:000007">
    <property type="entry name" value="rRNA adenine N(6)-methyltransferase"/>
    <property type="match status" value="1"/>
</dbReference>
<dbReference type="Gene3D" id="1.10.8.480">
    <property type="match status" value="1"/>
</dbReference>
<dbReference type="Gene3D" id="3.40.50.150">
    <property type="entry name" value="Vaccinia Virus protein VP39"/>
    <property type="match status" value="1"/>
</dbReference>
<dbReference type="HAMAP" id="MF_00607">
    <property type="entry name" value="16SrRNA_methyltr_A"/>
    <property type="match status" value="1"/>
</dbReference>
<dbReference type="InterPro" id="IPR001737">
    <property type="entry name" value="KsgA/Erm"/>
</dbReference>
<dbReference type="InterPro" id="IPR020596">
    <property type="entry name" value="rRNA_Ade_Mease_Trfase_CS"/>
</dbReference>
<dbReference type="InterPro" id="IPR020598">
    <property type="entry name" value="rRNA_Ade_methylase_Trfase_N"/>
</dbReference>
<dbReference type="InterPro" id="IPR011530">
    <property type="entry name" value="rRNA_adenine_dimethylase"/>
</dbReference>
<dbReference type="InterPro" id="IPR029063">
    <property type="entry name" value="SAM-dependent_MTases_sf"/>
</dbReference>
<dbReference type="NCBIfam" id="TIGR00755">
    <property type="entry name" value="ksgA"/>
    <property type="match status" value="1"/>
</dbReference>
<dbReference type="PANTHER" id="PTHR11727">
    <property type="entry name" value="DIMETHYLADENOSINE TRANSFERASE"/>
    <property type="match status" value="1"/>
</dbReference>
<dbReference type="PANTHER" id="PTHR11727:SF7">
    <property type="entry name" value="DIMETHYLADENOSINE TRANSFERASE-RELATED"/>
    <property type="match status" value="1"/>
</dbReference>
<dbReference type="Pfam" id="PF00398">
    <property type="entry name" value="RrnaAD"/>
    <property type="match status" value="1"/>
</dbReference>
<dbReference type="SMART" id="SM00650">
    <property type="entry name" value="rADc"/>
    <property type="match status" value="1"/>
</dbReference>
<dbReference type="SUPFAM" id="SSF53335">
    <property type="entry name" value="S-adenosyl-L-methionine-dependent methyltransferases"/>
    <property type="match status" value="1"/>
</dbReference>
<dbReference type="PROSITE" id="PS01131">
    <property type="entry name" value="RRNA_A_DIMETH"/>
    <property type="match status" value="1"/>
</dbReference>
<dbReference type="PROSITE" id="PS51689">
    <property type="entry name" value="SAM_RNA_A_N6_MT"/>
    <property type="match status" value="1"/>
</dbReference>
<accession>Q54QK7</accession>
<keyword id="KW-0489">Methyltransferase</keyword>
<keyword id="KW-0539">Nucleus</keyword>
<keyword id="KW-1185">Reference proteome</keyword>
<keyword id="KW-0694">RNA-binding</keyword>
<keyword id="KW-0698">rRNA processing</keyword>
<keyword id="KW-0949">S-adenosyl-L-methionine</keyword>
<keyword id="KW-0808">Transferase</keyword>
<comment type="function">
    <text evidence="2">Specifically dimethylates two adjacent adenosines in the loop of a conserved hairpin near the 3'-end of 18S rRNA in the 40S particle. Involved in the pre-rRNA processing steps leading to small-subunit rRNA production independently of its RNA-modifying catalytic activity. Part of the small subunit (SSU) processome, first precursor of the small eukaryotic ribosomal subunit. During the assembly of the SSU processome in the nucleolus, many ribosome biogenesis factors, an RNA chaperone and ribosomal proteins associate with the nascent pre-rRNA and work in concert to generate RNA folding, modifications, rearrangements and cleavage as well as targeted degradation of pre-ribosomal RNA by the RNA exosome.</text>
</comment>
<comment type="catalytic activity">
    <reaction evidence="2">
        <text>adenosine(1779)/adenosine(1780) in 18S rRNA + 4 S-adenosyl-L-methionine = N(6)-dimethyladenosine(1779)/N(6)-dimethyladenosine(1780) in 18S rRNA + 4 S-adenosyl-L-homocysteine + 4 H(+)</text>
        <dbReference type="Rhea" id="RHEA:42780"/>
        <dbReference type="Rhea" id="RHEA-COMP:10234"/>
        <dbReference type="Rhea" id="RHEA-COMP:10236"/>
        <dbReference type="ChEBI" id="CHEBI:15378"/>
        <dbReference type="ChEBI" id="CHEBI:57856"/>
        <dbReference type="ChEBI" id="CHEBI:59789"/>
        <dbReference type="ChEBI" id="CHEBI:74411"/>
        <dbReference type="ChEBI" id="CHEBI:74493"/>
        <dbReference type="EC" id="2.1.1.183"/>
    </reaction>
</comment>
<comment type="subunit">
    <text evidence="2">Part of the small subunit (SSU) processome, composed of more than 70 proteins and the RNA chaperone small nucleolar RNA (snoRNA) U3.</text>
</comment>
<comment type="subcellular location">
    <subcellularLocation>
        <location evidence="2">Nucleus</location>
        <location evidence="2">Nucleoplasm</location>
    </subcellularLocation>
    <subcellularLocation>
        <location evidence="2">Nucleus</location>
        <location evidence="2">Nucleolus</location>
    </subcellularLocation>
</comment>
<comment type="similarity">
    <text evidence="3">Belongs to the class I-like SAM-binding methyltransferase superfamily. rRNA adenine N(6)-methyltransferase family.</text>
</comment>
<sequence>MVKPVKIGVDAKVEKTKSATAARHHEFQMNKSYGQHLLKNPLIIDAIVDKSQLKSTDTVLEIGPGTGNLTMKLLENCKKVIAIEVDPRMAAELQKRVAASPYAQHLQIILGDFLKVDLPYFDVCVANVPYQISSPLTFKLLAHRPIFRTAVLMFQKEFALRLGAKPGDSLYCRLSVNTQLLSKVTHLMKVGKNNFLPPPKVESAVVRIEPFNPPPPINFVEWDGLVKLCFSRKNKTLSGIFRVSSVIETLNQNYKTYCALEGKMNTDGSDEQMKELIIKTLTDNDFLDSRSSKLDINDFLKLLNKFHETGIHFK</sequence>
<name>DIM1_DICDI</name>
<protein>
    <recommendedName>
        <fullName>Probable dimethyladenosine transferase</fullName>
        <ecNumber evidence="2">2.1.1.183</ecNumber>
    </recommendedName>
    <alternativeName>
        <fullName>DIM1 dimethyladenosine transferase 1 homolog</fullName>
    </alternativeName>
    <alternativeName>
        <fullName>Probable 18S rRNA (adenine(1779)-N(6)/adenine(1780)-N(6))-dimethyltransferase</fullName>
    </alternativeName>
    <alternativeName>
        <fullName>Probable 18S rRNA dimethylase</fullName>
    </alternativeName>
    <alternativeName>
        <fullName>Probable S-adenosylmethionine-6-N',N'-adenosyl(rRNA) dimethyltransferase</fullName>
    </alternativeName>
</protein>
<feature type="chain" id="PRO_0000331366" description="Probable dimethyladenosine transferase">
    <location>
        <begin position="1"/>
        <end position="314"/>
    </location>
</feature>
<feature type="binding site" evidence="1">
    <location>
        <position position="36"/>
    </location>
    <ligand>
        <name>S-adenosyl-L-methionine</name>
        <dbReference type="ChEBI" id="CHEBI:59789"/>
    </ligand>
</feature>
<feature type="binding site" evidence="1">
    <location>
        <position position="38"/>
    </location>
    <ligand>
        <name>S-adenosyl-L-methionine</name>
        <dbReference type="ChEBI" id="CHEBI:59789"/>
    </ligand>
</feature>
<feature type="binding site" evidence="1">
    <location>
        <position position="63"/>
    </location>
    <ligand>
        <name>S-adenosyl-L-methionine</name>
        <dbReference type="ChEBI" id="CHEBI:59789"/>
    </ligand>
</feature>
<feature type="binding site" evidence="1">
    <location>
        <position position="84"/>
    </location>
    <ligand>
        <name>S-adenosyl-L-methionine</name>
        <dbReference type="ChEBI" id="CHEBI:59789"/>
    </ligand>
</feature>
<feature type="binding site" evidence="1">
    <location>
        <position position="112"/>
    </location>
    <ligand>
        <name>S-adenosyl-L-methionine</name>
        <dbReference type="ChEBI" id="CHEBI:59789"/>
    </ligand>
</feature>
<feature type="binding site" evidence="1">
    <location>
        <position position="127"/>
    </location>
    <ligand>
        <name>S-adenosyl-L-methionine</name>
        <dbReference type="ChEBI" id="CHEBI:59789"/>
    </ligand>
</feature>
<evidence type="ECO:0000250" key="1"/>
<evidence type="ECO:0000250" key="2">
    <source>
        <dbReference type="UniProtKB" id="Q9UNQ2"/>
    </source>
</evidence>
<evidence type="ECO:0000305" key="3"/>
<gene>
    <name type="primary">dimt1</name>
    <name type="synonym">dimt1l</name>
    <name type="ORF">DDB_G0283789</name>
</gene>
<proteinExistence type="inferred from homology"/>
<organism>
    <name type="scientific">Dictyostelium discoideum</name>
    <name type="common">Social amoeba</name>
    <dbReference type="NCBI Taxonomy" id="44689"/>
    <lineage>
        <taxon>Eukaryota</taxon>
        <taxon>Amoebozoa</taxon>
        <taxon>Evosea</taxon>
        <taxon>Eumycetozoa</taxon>
        <taxon>Dictyostelia</taxon>
        <taxon>Dictyosteliales</taxon>
        <taxon>Dictyosteliaceae</taxon>
        <taxon>Dictyostelium</taxon>
    </lineage>
</organism>
<reference key="1">
    <citation type="journal article" date="2005" name="Nature">
        <title>The genome of the social amoeba Dictyostelium discoideum.</title>
        <authorList>
            <person name="Eichinger L."/>
            <person name="Pachebat J.A."/>
            <person name="Gloeckner G."/>
            <person name="Rajandream M.A."/>
            <person name="Sucgang R."/>
            <person name="Berriman M."/>
            <person name="Song J."/>
            <person name="Olsen R."/>
            <person name="Szafranski K."/>
            <person name="Xu Q."/>
            <person name="Tunggal B."/>
            <person name="Kummerfeld S."/>
            <person name="Madera M."/>
            <person name="Konfortov B.A."/>
            <person name="Rivero F."/>
            <person name="Bankier A.T."/>
            <person name="Lehmann R."/>
            <person name="Hamlin N."/>
            <person name="Davies R."/>
            <person name="Gaudet P."/>
            <person name="Fey P."/>
            <person name="Pilcher K."/>
            <person name="Chen G."/>
            <person name="Saunders D."/>
            <person name="Sodergren E.J."/>
            <person name="Davis P."/>
            <person name="Kerhornou A."/>
            <person name="Nie X."/>
            <person name="Hall N."/>
            <person name="Anjard C."/>
            <person name="Hemphill L."/>
            <person name="Bason N."/>
            <person name="Farbrother P."/>
            <person name="Desany B."/>
            <person name="Just E."/>
            <person name="Morio T."/>
            <person name="Rost R."/>
            <person name="Churcher C.M."/>
            <person name="Cooper J."/>
            <person name="Haydock S."/>
            <person name="van Driessche N."/>
            <person name="Cronin A."/>
            <person name="Goodhead I."/>
            <person name="Muzny D.M."/>
            <person name="Mourier T."/>
            <person name="Pain A."/>
            <person name="Lu M."/>
            <person name="Harper D."/>
            <person name="Lindsay R."/>
            <person name="Hauser H."/>
            <person name="James K.D."/>
            <person name="Quiles M."/>
            <person name="Madan Babu M."/>
            <person name="Saito T."/>
            <person name="Buchrieser C."/>
            <person name="Wardroper A."/>
            <person name="Felder M."/>
            <person name="Thangavelu M."/>
            <person name="Johnson D."/>
            <person name="Knights A."/>
            <person name="Loulseged H."/>
            <person name="Mungall K.L."/>
            <person name="Oliver K."/>
            <person name="Price C."/>
            <person name="Quail M.A."/>
            <person name="Urushihara H."/>
            <person name="Hernandez J."/>
            <person name="Rabbinowitsch E."/>
            <person name="Steffen D."/>
            <person name="Sanders M."/>
            <person name="Ma J."/>
            <person name="Kohara Y."/>
            <person name="Sharp S."/>
            <person name="Simmonds M.N."/>
            <person name="Spiegler S."/>
            <person name="Tivey A."/>
            <person name="Sugano S."/>
            <person name="White B."/>
            <person name="Walker D."/>
            <person name="Woodward J.R."/>
            <person name="Winckler T."/>
            <person name="Tanaka Y."/>
            <person name="Shaulsky G."/>
            <person name="Schleicher M."/>
            <person name="Weinstock G.M."/>
            <person name="Rosenthal A."/>
            <person name="Cox E.C."/>
            <person name="Chisholm R.L."/>
            <person name="Gibbs R.A."/>
            <person name="Loomis W.F."/>
            <person name="Platzer M."/>
            <person name="Kay R.R."/>
            <person name="Williams J.G."/>
            <person name="Dear P.H."/>
            <person name="Noegel A.A."/>
            <person name="Barrell B.G."/>
            <person name="Kuspa A."/>
        </authorList>
    </citation>
    <scope>NUCLEOTIDE SEQUENCE [LARGE SCALE GENOMIC DNA]</scope>
    <source>
        <strain>AX4</strain>
    </source>
</reference>